<dbReference type="EMBL" id="AF250140">
    <property type="protein sequence ID" value="AAF65565.1"/>
    <property type="molecule type" value="Genomic_DNA"/>
</dbReference>
<dbReference type="EMBL" id="CP000076">
    <property type="protein sequence ID" value="AAY93248.1"/>
    <property type="molecule type" value="Genomic_DNA"/>
</dbReference>
<dbReference type="RefSeq" id="WP_011062271.1">
    <property type="nucleotide sequence ID" value="NC_004129.6"/>
</dbReference>
<dbReference type="SMR" id="Q9KHS6"/>
<dbReference type="STRING" id="220664.PFL_3984"/>
<dbReference type="KEGG" id="pfl:PFL_3984"/>
<dbReference type="eggNOG" id="COG0776">
    <property type="taxonomic scope" value="Bacteria"/>
</dbReference>
<dbReference type="HOGENOM" id="CLU_105066_3_2_6"/>
<dbReference type="Proteomes" id="UP000008540">
    <property type="component" value="Chromosome"/>
</dbReference>
<dbReference type="GO" id="GO:0005829">
    <property type="term" value="C:cytosol"/>
    <property type="evidence" value="ECO:0007669"/>
    <property type="project" value="TreeGrafter"/>
</dbReference>
<dbReference type="GO" id="GO:0003677">
    <property type="term" value="F:DNA binding"/>
    <property type="evidence" value="ECO:0007669"/>
    <property type="project" value="UniProtKB-KW"/>
</dbReference>
<dbReference type="GO" id="GO:0030527">
    <property type="term" value="F:structural constituent of chromatin"/>
    <property type="evidence" value="ECO:0007669"/>
    <property type="project" value="InterPro"/>
</dbReference>
<dbReference type="GO" id="GO:0030261">
    <property type="term" value="P:chromosome condensation"/>
    <property type="evidence" value="ECO:0007669"/>
    <property type="project" value="UniProtKB-KW"/>
</dbReference>
<dbReference type="CDD" id="cd13831">
    <property type="entry name" value="HU"/>
    <property type="match status" value="1"/>
</dbReference>
<dbReference type="FunFam" id="4.10.520.10:FF:000001">
    <property type="entry name" value="DNA-binding protein HU"/>
    <property type="match status" value="1"/>
</dbReference>
<dbReference type="Gene3D" id="4.10.520.10">
    <property type="entry name" value="IHF-like DNA-binding proteins"/>
    <property type="match status" value="1"/>
</dbReference>
<dbReference type="InterPro" id="IPR000119">
    <property type="entry name" value="Hist_DNA-bd"/>
</dbReference>
<dbReference type="InterPro" id="IPR020816">
    <property type="entry name" value="Histone-like_DNA-bd_CS"/>
</dbReference>
<dbReference type="InterPro" id="IPR010992">
    <property type="entry name" value="IHF-like_DNA-bd_dom_sf"/>
</dbReference>
<dbReference type="PANTHER" id="PTHR33175">
    <property type="entry name" value="DNA-BINDING PROTEIN HU"/>
    <property type="match status" value="1"/>
</dbReference>
<dbReference type="PANTHER" id="PTHR33175:SF3">
    <property type="entry name" value="DNA-BINDING PROTEIN HU-BETA"/>
    <property type="match status" value="1"/>
</dbReference>
<dbReference type="Pfam" id="PF00216">
    <property type="entry name" value="Bac_DNA_binding"/>
    <property type="match status" value="1"/>
</dbReference>
<dbReference type="PRINTS" id="PR01727">
    <property type="entry name" value="DNABINDINGHU"/>
</dbReference>
<dbReference type="SMART" id="SM00411">
    <property type="entry name" value="BHL"/>
    <property type="match status" value="1"/>
</dbReference>
<dbReference type="SUPFAM" id="SSF47729">
    <property type="entry name" value="IHF-like DNA-binding proteins"/>
    <property type="match status" value="1"/>
</dbReference>
<dbReference type="PROSITE" id="PS00045">
    <property type="entry name" value="HISTONE_LIKE"/>
    <property type="match status" value="1"/>
</dbReference>
<accession>Q9KHS6</accession>
<accession>Q4K9J9</accession>
<keyword id="KW-0226">DNA condensation</keyword>
<keyword id="KW-0238">DNA-binding</keyword>
<feature type="chain" id="PRO_0000104957" description="DNA-binding protein HU-beta">
    <location>
        <begin position="1"/>
        <end position="90"/>
    </location>
</feature>
<organism>
    <name type="scientific">Pseudomonas fluorescens (strain ATCC BAA-477 / NRRL B-23932 / Pf-5)</name>
    <dbReference type="NCBI Taxonomy" id="220664"/>
    <lineage>
        <taxon>Bacteria</taxon>
        <taxon>Pseudomonadati</taxon>
        <taxon>Pseudomonadota</taxon>
        <taxon>Gammaproteobacteria</taxon>
        <taxon>Pseudomonadales</taxon>
        <taxon>Pseudomonadaceae</taxon>
        <taxon>Pseudomonas</taxon>
    </lineage>
</organism>
<proteinExistence type="inferred from homology"/>
<gene>
    <name type="primary">hupB</name>
    <name type="ordered locus">PFL_3984</name>
</gene>
<name>DBHB_PSEF5</name>
<protein>
    <recommendedName>
        <fullName>DNA-binding protein HU-beta</fullName>
    </recommendedName>
</protein>
<evidence type="ECO:0000250" key="1"/>
<evidence type="ECO:0000305" key="2"/>
<reference key="1">
    <citation type="journal article" date="2000" name="Appl. Environ. Microbiol.">
        <title>Lon protease influences antibiotic production and UV tolerance of Pseudomonas fluorescens Pf-5.</title>
        <authorList>
            <person name="Whistler C.A."/>
            <person name="Stockwell V.O."/>
            <person name="Loper J.E."/>
        </authorList>
    </citation>
    <scope>NUCLEOTIDE SEQUENCE [GENOMIC DNA]</scope>
</reference>
<reference key="2">
    <citation type="journal article" date="2005" name="Nat. Biotechnol.">
        <title>Complete genome sequence of the plant commensal Pseudomonas fluorescens Pf-5.</title>
        <authorList>
            <person name="Paulsen I.T."/>
            <person name="Press C.M."/>
            <person name="Ravel J."/>
            <person name="Kobayashi D.Y."/>
            <person name="Myers G.S.A."/>
            <person name="Mavrodi D.V."/>
            <person name="DeBoy R.T."/>
            <person name="Seshadri R."/>
            <person name="Ren Q."/>
            <person name="Madupu R."/>
            <person name="Dodson R.J."/>
            <person name="Durkin A.S."/>
            <person name="Brinkac L.M."/>
            <person name="Daugherty S.C."/>
            <person name="Sullivan S.A."/>
            <person name="Rosovitz M.J."/>
            <person name="Gwinn M.L."/>
            <person name="Zhou L."/>
            <person name="Schneider D.J."/>
            <person name="Cartinhour S.W."/>
            <person name="Nelson W.C."/>
            <person name="Weidman J."/>
            <person name="Watkins K."/>
            <person name="Tran K."/>
            <person name="Khouri H."/>
            <person name="Pierson E.A."/>
            <person name="Pierson L.S. III"/>
            <person name="Thomashow L.S."/>
            <person name="Loper J.E."/>
        </authorList>
    </citation>
    <scope>NUCLEOTIDE SEQUENCE [LARGE SCALE GENOMIC DNA]</scope>
    <source>
        <strain>ATCC BAA-477 / NRRL B-23932 / Pf-5</strain>
    </source>
</reference>
<sequence length="90" mass="9106">MNKSELIDAIAASADLPKAAAGRALDAVIESVTGALKAGDSVVLVGFGTFSVTDRPARIGRNPQTGKTLEIAAAKKPGFKAGKALKEAVN</sequence>
<comment type="function">
    <text evidence="1">Histone-like DNA-binding protein which is capable of wrapping DNA to stabilize it, and thus to prevent its denaturation under extreme environmental conditions.</text>
</comment>
<comment type="subunit">
    <text evidence="1">Heterodimer of an alpha and a beta chain.</text>
</comment>
<comment type="similarity">
    <text evidence="2">Belongs to the bacterial histone-like protein family.</text>
</comment>